<feature type="chain" id="PRO_1000022419" description="Phenylalanine--tRNA ligase beta subunit">
    <location>
        <begin position="1"/>
        <end position="540"/>
    </location>
</feature>
<feature type="domain" description="B5" evidence="1">
    <location>
        <begin position="270"/>
        <end position="347"/>
    </location>
</feature>
<feature type="binding site" evidence="1">
    <location>
        <position position="325"/>
    </location>
    <ligand>
        <name>Mg(2+)</name>
        <dbReference type="ChEBI" id="CHEBI:18420"/>
        <note>shared with alpha subunit</note>
    </ligand>
</feature>
<feature type="binding site" evidence="1">
    <location>
        <position position="331"/>
    </location>
    <ligand>
        <name>Mg(2+)</name>
        <dbReference type="ChEBI" id="CHEBI:18420"/>
        <note>shared with alpha subunit</note>
    </ligand>
</feature>
<feature type="binding site" evidence="1">
    <location>
        <position position="334"/>
    </location>
    <ligand>
        <name>Mg(2+)</name>
        <dbReference type="ChEBI" id="CHEBI:18420"/>
        <note>shared with alpha subunit</note>
    </ligand>
</feature>
<feature type="binding site" evidence="1">
    <location>
        <position position="335"/>
    </location>
    <ligand>
        <name>Mg(2+)</name>
        <dbReference type="ChEBI" id="CHEBI:18420"/>
        <note>shared with alpha subunit</note>
    </ligand>
</feature>
<sequence length="540" mass="60688">MPIITLQYEDLESLTKADKDTIIDRVPMIGADIERIEKEAIDIEFFPDRPDLYSVEGVARAMRGFMNIETGLCQYEVTPSGVHIELDEKIKEVRPVLGCAIVKGINFTSSSIKSLMDLQEDLHWGLGRNRKKVSIGVHDMTNIEPPFKYQAVSPDFEFVPLDFTEPMTMDEVLEKHPKGVRFANILEGMEKYPLITDSEGKVLSFPPIINGTLTRVEESTTDLFIDVTGLGDAVYTALSIVVSALAERGGKIESVKVVYPDGTEKVTPDMTPRTLNVPRSDIDSLIGIKLTDDEIINELKRMRFDASVLEDGDMFEISVPTYRADILHNFDIVEDIAIGYGFDKIKSEFPKSATIGCAHPISVTRGVMREIMVSLGYSEVMPFTLTSQKVHFEWMNREETDDVTFVLHPISEDQTMVRTTILPNLIEIFSLNQHHELPQRLFEVGEVVVNSKNRLHLAAASIHAQANFTEIREVLDAVMRERDIEYEVVVSEDPAFIEGRRADILVNGEKVGMMGELYPEVIINFGLGQPIVGFEIDLTE</sequence>
<protein>
    <recommendedName>
        <fullName evidence="1">Phenylalanine--tRNA ligase beta subunit</fullName>
        <ecNumber evidence="1">6.1.1.20</ecNumber>
    </recommendedName>
    <alternativeName>
        <fullName evidence="1">Phenylalanyl-tRNA synthetase beta subunit</fullName>
        <shortName evidence="1">PheRS</shortName>
    </alternativeName>
</protein>
<dbReference type="EC" id="6.1.1.20" evidence="1"/>
<dbReference type="EMBL" id="CP000300">
    <property type="protein sequence ID" value="ABE51434.1"/>
    <property type="molecule type" value="Genomic_DNA"/>
</dbReference>
<dbReference type="RefSeq" id="WP_011498596.1">
    <property type="nucleotide sequence ID" value="NC_007955.1"/>
</dbReference>
<dbReference type="SMR" id="Q12YP2"/>
<dbReference type="STRING" id="259564.Mbur_0447"/>
<dbReference type="GeneID" id="3997643"/>
<dbReference type="KEGG" id="mbu:Mbur_0447"/>
<dbReference type="HOGENOM" id="CLU_020279_3_0_2"/>
<dbReference type="OrthoDB" id="10073at2157"/>
<dbReference type="Proteomes" id="UP000001979">
    <property type="component" value="Chromosome"/>
</dbReference>
<dbReference type="GO" id="GO:0009328">
    <property type="term" value="C:phenylalanine-tRNA ligase complex"/>
    <property type="evidence" value="ECO:0007669"/>
    <property type="project" value="TreeGrafter"/>
</dbReference>
<dbReference type="GO" id="GO:0005524">
    <property type="term" value="F:ATP binding"/>
    <property type="evidence" value="ECO:0007669"/>
    <property type="project" value="UniProtKB-UniRule"/>
</dbReference>
<dbReference type="GO" id="GO:0000287">
    <property type="term" value="F:magnesium ion binding"/>
    <property type="evidence" value="ECO:0007669"/>
    <property type="project" value="InterPro"/>
</dbReference>
<dbReference type="GO" id="GO:0004826">
    <property type="term" value="F:phenylalanine-tRNA ligase activity"/>
    <property type="evidence" value="ECO:0007669"/>
    <property type="project" value="UniProtKB-UniRule"/>
</dbReference>
<dbReference type="GO" id="GO:0003723">
    <property type="term" value="F:RNA binding"/>
    <property type="evidence" value="ECO:0007669"/>
    <property type="project" value="InterPro"/>
</dbReference>
<dbReference type="GO" id="GO:0006432">
    <property type="term" value="P:phenylalanyl-tRNA aminoacylation"/>
    <property type="evidence" value="ECO:0007669"/>
    <property type="project" value="UniProtKB-UniRule"/>
</dbReference>
<dbReference type="CDD" id="cd00769">
    <property type="entry name" value="PheRS_beta_core"/>
    <property type="match status" value="1"/>
</dbReference>
<dbReference type="FunFam" id="3.30.56.10:FF:000011">
    <property type="entry name" value="Phenylalanine--tRNA ligase beta subunit"/>
    <property type="match status" value="1"/>
</dbReference>
<dbReference type="FunFam" id="3.50.40.10:FF:000003">
    <property type="entry name" value="Phenylalanine--tRNA ligase beta subunit"/>
    <property type="match status" value="1"/>
</dbReference>
<dbReference type="Gene3D" id="3.30.56.10">
    <property type="match status" value="2"/>
</dbReference>
<dbReference type="Gene3D" id="3.30.930.10">
    <property type="entry name" value="Bira Bifunctional Protein, Domain 2"/>
    <property type="match status" value="1"/>
</dbReference>
<dbReference type="Gene3D" id="3.50.40.10">
    <property type="entry name" value="Phenylalanyl-trna Synthetase, Chain B, domain 3"/>
    <property type="match status" value="1"/>
</dbReference>
<dbReference type="HAMAP" id="MF_00284">
    <property type="entry name" value="Phe_tRNA_synth_beta2"/>
    <property type="match status" value="1"/>
</dbReference>
<dbReference type="InterPro" id="IPR045864">
    <property type="entry name" value="aa-tRNA-synth_II/BPL/LPL"/>
</dbReference>
<dbReference type="InterPro" id="IPR005146">
    <property type="entry name" value="B3/B4_tRNA-bd"/>
</dbReference>
<dbReference type="InterPro" id="IPR009061">
    <property type="entry name" value="DNA-bd_dom_put_sf"/>
</dbReference>
<dbReference type="InterPro" id="IPR045060">
    <property type="entry name" value="Phe-tRNA-ligase_IIc_bsu"/>
</dbReference>
<dbReference type="InterPro" id="IPR004531">
    <property type="entry name" value="Phe-tRNA-synth_IIc_bsu_arc_euk"/>
</dbReference>
<dbReference type="InterPro" id="IPR020825">
    <property type="entry name" value="Phe-tRNA_synthase-like_B3/B4"/>
</dbReference>
<dbReference type="InterPro" id="IPR022918">
    <property type="entry name" value="Phe_tRNA_ligase_beta2_arc"/>
</dbReference>
<dbReference type="InterPro" id="IPR041616">
    <property type="entry name" value="PheRS_beta_core"/>
</dbReference>
<dbReference type="InterPro" id="IPR005147">
    <property type="entry name" value="tRNA_synthase_B5-dom"/>
</dbReference>
<dbReference type="NCBIfam" id="TIGR00471">
    <property type="entry name" value="pheT_arch"/>
    <property type="match status" value="1"/>
</dbReference>
<dbReference type="PANTHER" id="PTHR10947:SF0">
    <property type="entry name" value="PHENYLALANINE--TRNA LIGASE BETA SUBUNIT"/>
    <property type="match status" value="1"/>
</dbReference>
<dbReference type="PANTHER" id="PTHR10947">
    <property type="entry name" value="PHENYLALANYL-TRNA SYNTHETASE BETA CHAIN AND LEUCINE-RICH REPEAT-CONTAINING PROTEIN 47"/>
    <property type="match status" value="1"/>
</dbReference>
<dbReference type="Pfam" id="PF03483">
    <property type="entry name" value="B3_4"/>
    <property type="match status" value="1"/>
</dbReference>
<dbReference type="Pfam" id="PF03484">
    <property type="entry name" value="B5"/>
    <property type="match status" value="1"/>
</dbReference>
<dbReference type="Pfam" id="PF17759">
    <property type="entry name" value="tRNA_synthFbeta"/>
    <property type="match status" value="1"/>
</dbReference>
<dbReference type="SMART" id="SM00873">
    <property type="entry name" value="B3_4"/>
    <property type="match status" value="1"/>
</dbReference>
<dbReference type="SMART" id="SM00874">
    <property type="entry name" value="B5"/>
    <property type="match status" value="1"/>
</dbReference>
<dbReference type="SUPFAM" id="SSF55681">
    <property type="entry name" value="Class II aaRS and biotin synthetases"/>
    <property type="match status" value="1"/>
</dbReference>
<dbReference type="SUPFAM" id="SSF46955">
    <property type="entry name" value="Putative DNA-binding domain"/>
    <property type="match status" value="2"/>
</dbReference>
<dbReference type="PROSITE" id="PS51483">
    <property type="entry name" value="B5"/>
    <property type="match status" value="1"/>
</dbReference>
<keyword id="KW-0030">Aminoacyl-tRNA synthetase</keyword>
<keyword id="KW-0067">ATP-binding</keyword>
<keyword id="KW-0963">Cytoplasm</keyword>
<keyword id="KW-0436">Ligase</keyword>
<keyword id="KW-0460">Magnesium</keyword>
<keyword id="KW-0479">Metal-binding</keyword>
<keyword id="KW-0547">Nucleotide-binding</keyword>
<keyword id="KW-0648">Protein biosynthesis</keyword>
<organism>
    <name type="scientific">Methanococcoides burtonii (strain DSM 6242 / NBRC 107633 / OCM 468 / ACE-M)</name>
    <dbReference type="NCBI Taxonomy" id="259564"/>
    <lineage>
        <taxon>Archaea</taxon>
        <taxon>Methanobacteriati</taxon>
        <taxon>Methanobacteriota</taxon>
        <taxon>Stenosarchaea group</taxon>
        <taxon>Methanomicrobia</taxon>
        <taxon>Methanosarcinales</taxon>
        <taxon>Methanosarcinaceae</taxon>
        <taxon>Methanococcoides</taxon>
    </lineage>
</organism>
<accession>Q12YP2</accession>
<reference key="1">
    <citation type="journal article" date="2009" name="ISME J.">
        <title>The genome sequence of the psychrophilic archaeon, Methanococcoides burtonii: the role of genome evolution in cold adaptation.</title>
        <authorList>
            <person name="Allen M.A."/>
            <person name="Lauro F.M."/>
            <person name="Williams T.J."/>
            <person name="Burg D."/>
            <person name="Siddiqui K.S."/>
            <person name="De Francisci D."/>
            <person name="Chong K.W."/>
            <person name="Pilak O."/>
            <person name="Chew H.H."/>
            <person name="De Maere M.Z."/>
            <person name="Ting L."/>
            <person name="Katrib M."/>
            <person name="Ng C."/>
            <person name="Sowers K.R."/>
            <person name="Galperin M.Y."/>
            <person name="Anderson I.J."/>
            <person name="Ivanova N."/>
            <person name="Dalin E."/>
            <person name="Martinez M."/>
            <person name="Lapidus A."/>
            <person name="Hauser L."/>
            <person name="Land M."/>
            <person name="Thomas T."/>
            <person name="Cavicchioli R."/>
        </authorList>
    </citation>
    <scope>NUCLEOTIDE SEQUENCE [LARGE SCALE GENOMIC DNA]</scope>
    <source>
        <strain>DSM 6242 / NBRC 107633 / OCM 468 / ACE-M</strain>
    </source>
</reference>
<gene>
    <name evidence="1" type="primary">pheT</name>
    <name type="ordered locus">Mbur_0447</name>
</gene>
<name>SYFB_METBU</name>
<evidence type="ECO:0000255" key="1">
    <source>
        <dbReference type="HAMAP-Rule" id="MF_00284"/>
    </source>
</evidence>
<proteinExistence type="inferred from homology"/>
<comment type="catalytic activity">
    <reaction evidence="1">
        <text>tRNA(Phe) + L-phenylalanine + ATP = L-phenylalanyl-tRNA(Phe) + AMP + diphosphate + H(+)</text>
        <dbReference type="Rhea" id="RHEA:19413"/>
        <dbReference type="Rhea" id="RHEA-COMP:9668"/>
        <dbReference type="Rhea" id="RHEA-COMP:9699"/>
        <dbReference type="ChEBI" id="CHEBI:15378"/>
        <dbReference type="ChEBI" id="CHEBI:30616"/>
        <dbReference type="ChEBI" id="CHEBI:33019"/>
        <dbReference type="ChEBI" id="CHEBI:58095"/>
        <dbReference type="ChEBI" id="CHEBI:78442"/>
        <dbReference type="ChEBI" id="CHEBI:78531"/>
        <dbReference type="ChEBI" id="CHEBI:456215"/>
        <dbReference type="EC" id="6.1.1.20"/>
    </reaction>
</comment>
<comment type="cofactor">
    <cofactor evidence="1">
        <name>Mg(2+)</name>
        <dbReference type="ChEBI" id="CHEBI:18420"/>
    </cofactor>
</comment>
<comment type="subunit">
    <text evidence="1">Tetramer of two alpha and two beta subunits.</text>
</comment>
<comment type="subcellular location">
    <subcellularLocation>
        <location evidence="1">Cytoplasm</location>
    </subcellularLocation>
</comment>
<comment type="similarity">
    <text evidence="1">Belongs to the phenylalanyl-tRNA synthetase beta subunit family. Type 2 subfamily.</text>
</comment>